<gene>
    <name type="primary">ADCY4</name>
</gene>
<reference key="1">
    <citation type="journal article" date="2002" name="J. Recept. Signal Transduct.">
        <title>Characterization of the human adenylyl cyclase gene family: cDNA, gene structure, and tissue distribution of the nine isoforms.</title>
        <authorList>
            <person name="Ludwig M.G."/>
            <person name="Seuwen K."/>
        </authorList>
    </citation>
    <scope>NUCLEOTIDE SEQUENCE [MRNA] (ISOFORM 1)</scope>
    <source>
        <tissue>Spleen</tissue>
    </source>
</reference>
<reference key="2">
    <citation type="journal article" date="2004" name="Nat. Genet.">
        <title>Complete sequencing and characterization of 21,243 full-length human cDNAs.</title>
        <authorList>
            <person name="Ota T."/>
            <person name="Suzuki Y."/>
            <person name="Nishikawa T."/>
            <person name="Otsuki T."/>
            <person name="Sugiyama T."/>
            <person name="Irie R."/>
            <person name="Wakamatsu A."/>
            <person name="Hayashi K."/>
            <person name="Sato H."/>
            <person name="Nagai K."/>
            <person name="Kimura K."/>
            <person name="Makita H."/>
            <person name="Sekine M."/>
            <person name="Obayashi M."/>
            <person name="Nishi T."/>
            <person name="Shibahara T."/>
            <person name="Tanaka T."/>
            <person name="Ishii S."/>
            <person name="Yamamoto J."/>
            <person name="Saito K."/>
            <person name="Kawai Y."/>
            <person name="Isono Y."/>
            <person name="Nakamura Y."/>
            <person name="Nagahari K."/>
            <person name="Murakami K."/>
            <person name="Yasuda T."/>
            <person name="Iwayanagi T."/>
            <person name="Wagatsuma M."/>
            <person name="Shiratori A."/>
            <person name="Sudo H."/>
            <person name="Hosoiri T."/>
            <person name="Kaku Y."/>
            <person name="Kodaira H."/>
            <person name="Kondo H."/>
            <person name="Sugawara M."/>
            <person name="Takahashi M."/>
            <person name="Kanda K."/>
            <person name="Yokoi T."/>
            <person name="Furuya T."/>
            <person name="Kikkawa E."/>
            <person name="Omura Y."/>
            <person name="Abe K."/>
            <person name="Kamihara K."/>
            <person name="Katsuta N."/>
            <person name="Sato K."/>
            <person name="Tanikawa M."/>
            <person name="Yamazaki M."/>
            <person name="Ninomiya K."/>
            <person name="Ishibashi T."/>
            <person name="Yamashita H."/>
            <person name="Murakawa K."/>
            <person name="Fujimori K."/>
            <person name="Tanai H."/>
            <person name="Kimata M."/>
            <person name="Watanabe M."/>
            <person name="Hiraoka S."/>
            <person name="Chiba Y."/>
            <person name="Ishida S."/>
            <person name="Ono Y."/>
            <person name="Takiguchi S."/>
            <person name="Watanabe S."/>
            <person name="Yosida M."/>
            <person name="Hotuta T."/>
            <person name="Kusano J."/>
            <person name="Kanehori K."/>
            <person name="Takahashi-Fujii A."/>
            <person name="Hara H."/>
            <person name="Tanase T.-O."/>
            <person name="Nomura Y."/>
            <person name="Togiya S."/>
            <person name="Komai F."/>
            <person name="Hara R."/>
            <person name="Takeuchi K."/>
            <person name="Arita M."/>
            <person name="Imose N."/>
            <person name="Musashino K."/>
            <person name="Yuuki H."/>
            <person name="Oshima A."/>
            <person name="Sasaki N."/>
            <person name="Aotsuka S."/>
            <person name="Yoshikawa Y."/>
            <person name="Matsunawa H."/>
            <person name="Ichihara T."/>
            <person name="Shiohata N."/>
            <person name="Sano S."/>
            <person name="Moriya S."/>
            <person name="Momiyama H."/>
            <person name="Satoh N."/>
            <person name="Takami S."/>
            <person name="Terashima Y."/>
            <person name="Suzuki O."/>
            <person name="Nakagawa S."/>
            <person name="Senoh A."/>
            <person name="Mizoguchi H."/>
            <person name="Goto Y."/>
            <person name="Shimizu F."/>
            <person name="Wakebe H."/>
            <person name="Hishigaki H."/>
            <person name="Watanabe T."/>
            <person name="Sugiyama A."/>
            <person name="Takemoto M."/>
            <person name="Kawakami B."/>
            <person name="Yamazaki M."/>
            <person name="Watanabe K."/>
            <person name="Kumagai A."/>
            <person name="Itakura S."/>
            <person name="Fukuzumi Y."/>
            <person name="Fujimori Y."/>
            <person name="Komiyama M."/>
            <person name="Tashiro H."/>
            <person name="Tanigami A."/>
            <person name="Fujiwara T."/>
            <person name="Ono T."/>
            <person name="Yamada K."/>
            <person name="Fujii Y."/>
            <person name="Ozaki K."/>
            <person name="Hirao M."/>
            <person name="Ohmori Y."/>
            <person name="Kawabata A."/>
            <person name="Hikiji T."/>
            <person name="Kobatake N."/>
            <person name="Inagaki H."/>
            <person name="Ikema Y."/>
            <person name="Okamoto S."/>
            <person name="Okitani R."/>
            <person name="Kawakami T."/>
            <person name="Noguchi S."/>
            <person name="Itoh T."/>
            <person name="Shigeta K."/>
            <person name="Senba T."/>
            <person name="Matsumura K."/>
            <person name="Nakajima Y."/>
            <person name="Mizuno T."/>
            <person name="Morinaga M."/>
            <person name="Sasaki M."/>
            <person name="Togashi T."/>
            <person name="Oyama M."/>
            <person name="Hata H."/>
            <person name="Watanabe M."/>
            <person name="Komatsu T."/>
            <person name="Mizushima-Sugano J."/>
            <person name="Satoh T."/>
            <person name="Shirai Y."/>
            <person name="Takahashi Y."/>
            <person name="Nakagawa K."/>
            <person name="Okumura K."/>
            <person name="Nagase T."/>
            <person name="Nomura N."/>
            <person name="Kikuchi H."/>
            <person name="Masuho Y."/>
            <person name="Yamashita R."/>
            <person name="Nakai K."/>
            <person name="Yada T."/>
            <person name="Nakamura Y."/>
            <person name="Ohara O."/>
            <person name="Isogai T."/>
            <person name="Sugano S."/>
        </authorList>
    </citation>
    <scope>NUCLEOTIDE SEQUENCE [LARGE SCALE MRNA] (ISOFORMS 1 AND 2)</scope>
    <source>
        <tissue>Placenta</tissue>
        <tissue>Tongue</tissue>
        <tissue>Uterus</tissue>
    </source>
</reference>
<reference key="3">
    <citation type="journal article" date="2003" name="Nature">
        <title>The DNA sequence and analysis of human chromosome 14.</title>
        <authorList>
            <person name="Heilig R."/>
            <person name="Eckenberg R."/>
            <person name="Petit J.-L."/>
            <person name="Fonknechten N."/>
            <person name="Da Silva C."/>
            <person name="Cattolico L."/>
            <person name="Levy M."/>
            <person name="Barbe V."/>
            <person name="De Berardinis V."/>
            <person name="Ureta-Vidal A."/>
            <person name="Pelletier E."/>
            <person name="Vico V."/>
            <person name="Anthouard V."/>
            <person name="Rowen L."/>
            <person name="Madan A."/>
            <person name="Qin S."/>
            <person name="Sun H."/>
            <person name="Du H."/>
            <person name="Pepin K."/>
            <person name="Artiguenave F."/>
            <person name="Robert C."/>
            <person name="Cruaud C."/>
            <person name="Bruels T."/>
            <person name="Jaillon O."/>
            <person name="Friedlander L."/>
            <person name="Samson G."/>
            <person name="Brottier P."/>
            <person name="Cure S."/>
            <person name="Segurens B."/>
            <person name="Aniere F."/>
            <person name="Samain S."/>
            <person name="Crespeau H."/>
            <person name="Abbasi N."/>
            <person name="Aiach N."/>
            <person name="Boscus D."/>
            <person name="Dickhoff R."/>
            <person name="Dors M."/>
            <person name="Dubois I."/>
            <person name="Friedman C."/>
            <person name="Gouyvenoux M."/>
            <person name="James R."/>
            <person name="Madan A."/>
            <person name="Mairey-Estrada B."/>
            <person name="Mangenot S."/>
            <person name="Martins N."/>
            <person name="Menard M."/>
            <person name="Oztas S."/>
            <person name="Ratcliffe A."/>
            <person name="Shaffer T."/>
            <person name="Trask B."/>
            <person name="Vacherie B."/>
            <person name="Bellemere C."/>
            <person name="Belser C."/>
            <person name="Besnard-Gonnet M."/>
            <person name="Bartol-Mavel D."/>
            <person name="Boutard M."/>
            <person name="Briez-Silla S."/>
            <person name="Combette S."/>
            <person name="Dufosse-Laurent V."/>
            <person name="Ferron C."/>
            <person name="Lechaplais C."/>
            <person name="Louesse C."/>
            <person name="Muselet D."/>
            <person name="Magdelenat G."/>
            <person name="Pateau E."/>
            <person name="Petit E."/>
            <person name="Sirvain-Trukniewicz P."/>
            <person name="Trybou A."/>
            <person name="Vega-Czarny N."/>
            <person name="Bataille E."/>
            <person name="Bluet E."/>
            <person name="Bordelais I."/>
            <person name="Dubois M."/>
            <person name="Dumont C."/>
            <person name="Guerin T."/>
            <person name="Haffray S."/>
            <person name="Hammadi R."/>
            <person name="Muanga J."/>
            <person name="Pellouin V."/>
            <person name="Robert D."/>
            <person name="Wunderle E."/>
            <person name="Gauguet G."/>
            <person name="Roy A."/>
            <person name="Sainte-Marthe L."/>
            <person name="Verdier J."/>
            <person name="Verdier-Discala C."/>
            <person name="Hillier L.W."/>
            <person name="Fulton L."/>
            <person name="McPherson J."/>
            <person name="Matsuda F."/>
            <person name="Wilson R."/>
            <person name="Scarpelli C."/>
            <person name="Gyapay G."/>
            <person name="Wincker P."/>
            <person name="Saurin W."/>
            <person name="Quetier F."/>
            <person name="Waterston R."/>
            <person name="Hood L."/>
            <person name="Weissenbach J."/>
        </authorList>
    </citation>
    <scope>NUCLEOTIDE SEQUENCE [LARGE SCALE GENOMIC DNA]</scope>
</reference>
<reference key="4">
    <citation type="submission" date="2005-09" db="EMBL/GenBank/DDBJ databases">
        <authorList>
            <person name="Mural R.J."/>
            <person name="Istrail S."/>
            <person name="Sutton G.G."/>
            <person name="Florea L."/>
            <person name="Halpern A.L."/>
            <person name="Mobarry C.M."/>
            <person name="Lippert R."/>
            <person name="Walenz B."/>
            <person name="Shatkay H."/>
            <person name="Dew I."/>
            <person name="Miller J.R."/>
            <person name="Flanigan M.J."/>
            <person name="Edwards N.J."/>
            <person name="Bolanos R."/>
            <person name="Fasulo D."/>
            <person name="Halldorsson B.V."/>
            <person name="Hannenhalli S."/>
            <person name="Turner R."/>
            <person name="Yooseph S."/>
            <person name="Lu F."/>
            <person name="Nusskern D.R."/>
            <person name="Shue B.C."/>
            <person name="Zheng X.H."/>
            <person name="Zhong F."/>
            <person name="Delcher A.L."/>
            <person name="Huson D.H."/>
            <person name="Kravitz S.A."/>
            <person name="Mouchard L."/>
            <person name="Reinert K."/>
            <person name="Remington K.A."/>
            <person name="Clark A.G."/>
            <person name="Waterman M.S."/>
            <person name="Eichler E.E."/>
            <person name="Adams M.D."/>
            <person name="Hunkapiller M.W."/>
            <person name="Myers E.W."/>
            <person name="Venter J.C."/>
        </authorList>
    </citation>
    <scope>NUCLEOTIDE SEQUENCE [LARGE SCALE GENOMIC DNA]</scope>
</reference>
<reference key="5">
    <citation type="journal article" date="2004" name="Genome Res.">
        <title>The status, quality, and expansion of the NIH full-length cDNA project: the Mammalian Gene Collection (MGC).</title>
        <authorList>
            <consortium name="The MGC Project Team"/>
        </authorList>
    </citation>
    <scope>NUCLEOTIDE SEQUENCE [LARGE SCALE MRNA] (ISOFORM 1)</scope>
    <source>
        <tissue>Lung</tissue>
    </source>
</reference>
<reference key="6">
    <citation type="journal article" date="2001" name="J. Clin. Endocrinol. Metab.">
        <title>Expression and regulation of adenylyl cyclase isoforms in the human adrenal gland.</title>
        <authorList>
            <person name="Cote M."/>
            <person name="Guillon G."/>
            <person name="Payet M.D."/>
            <person name="Gallo-Payet N."/>
        </authorList>
    </citation>
    <scope>SUBCELLULAR LOCATION</scope>
    <scope>TISSUE SPECIFICITY</scope>
</reference>
<reference key="7">
    <citation type="journal article" date="2011" name="J. Pharmacol. Exp. Ther.">
        <title>Human bronchial smooth muscle cells express adenylyl cyclase isoforms 2, 4, and 6 in distinct membrane microdomains.</title>
        <authorList>
            <person name="Bogard A.S."/>
            <person name="Xu C."/>
            <person name="Ostrom R.S."/>
        </authorList>
    </citation>
    <scope>SUBCELLULAR LOCATION</scope>
</reference>
<accession>Q8NFM4</accession>
<accession>B3KV74</accession>
<accession>D3DS75</accession>
<accession>Q17R40</accession>
<accession>Q6ZTM6</accession>
<accession>Q96ML7</accession>
<organism>
    <name type="scientific">Homo sapiens</name>
    <name type="common">Human</name>
    <dbReference type="NCBI Taxonomy" id="9606"/>
    <lineage>
        <taxon>Eukaryota</taxon>
        <taxon>Metazoa</taxon>
        <taxon>Chordata</taxon>
        <taxon>Craniata</taxon>
        <taxon>Vertebrata</taxon>
        <taxon>Euteleostomi</taxon>
        <taxon>Mammalia</taxon>
        <taxon>Eutheria</taxon>
        <taxon>Euarchontoglires</taxon>
        <taxon>Primates</taxon>
        <taxon>Haplorrhini</taxon>
        <taxon>Catarrhini</taxon>
        <taxon>Hominidae</taxon>
        <taxon>Homo</taxon>
    </lineage>
</organism>
<protein>
    <recommendedName>
        <fullName>Adenylate cyclase type 4</fullName>
        <ecNumber evidence="2">4.6.1.1</ecNumber>
    </recommendedName>
    <alternativeName>
        <fullName>ATP pyrophosphate-lyase 4</fullName>
    </alternativeName>
    <alternativeName>
        <fullName>Adenylate cyclase type IV</fullName>
    </alternativeName>
    <alternativeName>
        <fullName>Adenylyl cyclase 4</fullName>
    </alternativeName>
</protein>
<feature type="chain" id="PRO_0000195690" description="Adenylate cyclase type 4">
    <location>
        <begin position="1"/>
        <end position="1077"/>
    </location>
</feature>
<feature type="topological domain" description="Cytoplasmic" evidence="4">
    <location>
        <begin position="1"/>
        <end position="28"/>
    </location>
</feature>
<feature type="transmembrane region" description="Helical" evidence="4">
    <location>
        <begin position="29"/>
        <end position="50"/>
    </location>
</feature>
<feature type="transmembrane region" description="Helical" evidence="4">
    <location>
        <begin position="61"/>
        <end position="80"/>
    </location>
</feature>
<feature type="transmembrane region" description="Helical" evidence="4">
    <location>
        <begin position="94"/>
        <end position="117"/>
    </location>
</feature>
<feature type="transmembrane region" description="Helical" evidence="4">
    <location>
        <begin position="120"/>
        <end position="138"/>
    </location>
</feature>
<feature type="transmembrane region" description="Helical" evidence="4">
    <location>
        <begin position="141"/>
        <end position="162"/>
    </location>
</feature>
<feature type="transmembrane region" description="Helical" evidence="4">
    <location>
        <begin position="170"/>
        <end position="190"/>
    </location>
</feature>
<feature type="topological domain" description="Cytoplasmic" evidence="4">
    <location>
        <begin position="191"/>
        <end position="585"/>
    </location>
</feature>
<feature type="transmembrane region" description="Helical" evidence="4">
    <location>
        <begin position="586"/>
        <end position="607"/>
    </location>
</feature>
<feature type="transmembrane region" description="Helical" evidence="4">
    <location>
        <begin position="611"/>
        <end position="633"/>
    </location>
</feature>
<feature type="transmembrane region" description="Helical" evidence="4">
    <location>
        <begin position="664"/>
        <end position="687"/>
    </location>
</feature>
<feature type="topological domain" description="Extracellular" evidence="4">
    <location>
        <begin position="688"/>
        <end position="714"/>
    </location>
</feature>
<feature type="transmembrane region" description="Helical" evidence="4">
    <location>
        <begin position="715"/>
        <end position="736"/>
    </location>
</feature>
<feature type="transmembrane region" description="Helical" evidence="4">
    <location>
        <begin position="744"/>
        <end position="764"/>
    </location>
</feature>
<feature type="transmembrane region" description="Helical" evidence="4">
    <location>
        <begin position="791"/>
        <end position="807"/>
    </location>
</feature>
<feature type="topological domain" description="Cytoplasmic" evidence="4">
    <location>
        <begin position="808"/>
        <end position="1077"/>
    </location>
</feature>
<feature type="binding site" evidence="3">
    <location>
        <begin position="278"/>
        <end position="283"/>
    </location>
    <ligand>
        <name>ATP</name>
        <dbReference type="ChEBI" id="CHEBI:30616"/>
    </ligand>
</feature>
<feature type="binding site" evidence="5">
    <location>
        <position position="278"/>
    </location>
    <ligand>
        <name>Mg(2+)</name>
        <dbReference type="ChEBI" id="CHEBI:18420"/>
        <label>1</label>
        <note>catalytic</note>
    </ligand>
</feature>
<feature type="binding site" evidence="5">
    <location>
        <position position="278"/>
    </location>
    <ligand>
        <name>Mg(2+)</name>
        <dbReference type="ChEBI" id="CHEBI:18420"/>
        <label>2</label>
        <note>catalytic</note>
    </ligand>
</feature>
<feature type="binding site" evidence="5">
    <location>
        <position position="279"/>
    </location>
    <ligand>
        <name>Mg(2+)</name>
        <dbReference type="ChEBI" id="CHEBI:18420"/>
        <label>2</label>
        <note>catalytic</note>
    </ligand>
</feature>
<feature type="binding site" evidence="3">
    <location>
        <begin position="320"/>
        <end position="322"/>
    </location>
    <ligand>
        <name>ATP</name>
        <dbReference type="ChEBI" id="CHEBI:30616"/>
    </ligand>
</feature>
<feature type="binding site" evidence="5">
    <location>
        <position position="322"/>
    </location>
    <ligand>
        <name>Mg(2+)</name>
        <dbReference type="ChEBI" id="CHEBI:18420"/>
        <label>1</label>
        <note>catalytic</note>
    </ligand>
</feature>
<feature type="binding site" evidence="5">
    <location>
        <position position="322"/>
    </location>
    <ligand>
        <name>Mg(2+)</name>
        <dbReference type="ChEBI" id="CHEBI:18420"/>
        <label>2</label>
        <note>catalytic</note>
    </ligand>
</feature>
<feature type="binding site" evidence="3">
    <location>
        <position position="366"/>
    </location>
    <ligand>
        <name>ATP</name>
        <dbReference type="ChEBI" id="CHEBI:30616"/>
    </ligand>
</feature>
<feature type="binding site" evidence="1">
    <location>
        <position position="925"/>
    </location>
    <ligand>
        <name>ATP</name>
        <dbReference type="ChEBI" id="CHEBI:30616"/>
    </ligand>
</feature>
<feature type="binding site" evidence="1">
    <location>
        <begin position="1005"/>
        <end position="1007"/>
    </location>
    <ligand>
        <name>ATP</name>
        <dbReference type="ChEBI" id="CHEBI:30616"/>
    </ligand>
</feature>
<feature type="binding site" evidence="1">
    <location>
        <begin position="1012"/>
        <end position="1016"/>
    </location>
    <ligand>
        <name>ATP</name>
        <dbReference type="ChEBI" id="CHEBI:30616"/>
    </ligand>
</feature>
<feature type="binding site" evidence="1">
    <location>
        <position position="1052"/>
    </location>
    <ligand>
        <name>ATP</name>
        <dbReference type="ChEBI" id="CHEBI:30616"/>
    </ligand>
</feature>
<feature type="modified residue" description="Phosphoserine" evidence="2">
    <location>
        <position position="520"/>
    </location>
</feature>
<feature type="modified residue" description="Phosphothreonine" evidence="2">
    <location>
        <position position="536"/>
    </location>
</feature>
<feature type="glycosylation site" description="N-linked (GlcNAc...) asparagine" evidence="4">
    <location>
        <position position="697"/>
    </location>
</feature>
<feature type="glycosylation site" description="N-linked (GlcNAc...) asparagine" evidence="4">
    <location>
        <position position="704"/>
    </location>
</feature>
<feature type="splice variant" id="VSP_055816" description="In isoform 2." evidence="8">
    <original>MARLFSPRPPPSEDLFYETYYSLSQQYPLLLLLLGIVLCALAALL</original>
    <variation>MSRGTRESACCMLTSWASRGWPASVPLRSWCSCSMSSLASSTRLP</variation>
    <location>
        <begin position="1"/>
        <end position="45"/>
    </location>
</feature>
<feature type="splice variant" id="VSP_055817" description="In isoform 2." evidence="8">
    <location>
        <begin position="46"/>
        <end position="352"/>
    </location>
</feature>
<feature type="splice variant" id="VSP_055818" description="In isoform 2." evidence="8">
    <original>YSMHCCT</original>
    <variation>VSVPTCP</variation>
    <location>
        <begin position="720"/>
        <end position="726"/>
    </location>
</feature>
<feature type="splice variant" id="VSP_055819" description="In isoform 2." evidence="8">
    <location>
        <begin position="727"/>
        <end position="1077"/>
    </location>
</feature>
<feature type="sequence conflict" description="In Ref. 2; BAB71270." evidence="9" ref="2">
    <original>E</original>
    <variation>G</variation>
    <location>
        <position position="571"/>
    </location>
</feature>
<proteinExistence type="evidence at protein level"/>
<comment type="function">
    <text evidence="2">Catalyzes the formation of the signaling molecule cAMP in response to G-protein signaling.</text>
</comment>
<comment type="catalytic activity">
    <reaction evidence="2">
        <text>ATP = 3',5'-cyclic AMP + diphosphate</text>
        <dbReference type="Rhea" id="RHEA:15389"/>
        <dbReference type="ChEBI" id="CHEBI:30616"/>
        <dbReference type="ChEBI" id="CHEBI:33019"/>
        <dbReference type="ChEBI" id="CHEBI:58165"/>
        <dbReference type="EC" id="4.6.1.1"/>
    </reaction>
</comment>
<comment type="cofactor">
    <cofactor evidence="2">
        <name>Mg(2+)</name>
        <dbReference type="ChEBI" id="CHEBI:18420"/>
    </cofactor>
    <cofactor evidence="2">
        <name>Mn(2+)</name>
        <dbReference type="ChEBI" id="CHEBI:29035"/>
    </cofactor>
    <text evidence="3">Binds 2 magnesium ions per subunit. Is also active with manganese (in vitro).</text>
</comment>
<comment type="activity regulation">
    <text evidence="2">Activated by forskolin. Insensitive to calcium/calmodulin. Stimulated by GNAS and by the G-protein beta and gamma subunit complex.</text>
</comment>
<comment type="interaction">
    <interactant intactId="EBI-2838710">
        <id>Q8NFM4</id>
    </interactant>
    <interactant intactId="EBI-2874661">
        <id>Q9BV19</id>
        <label>C1orf50</label>
    </interactant>
    <organismsDiffer>false</organismsDiffer>
    <experiments>3</experiments>
</comment>
<comment type="interaction">
    <interactant intactId="EBI-2838710">
        <id>Q8NFM4</id>
    </interactant>
    <interactant intactId="EBI-12001340">
        <id>P62508-3</id>
        <label>ESRRG</label>
    </interactant>
    <organismsDiffer>false</organismsDiffer>
    <experiments>6</experiments>
</comment>
<comment type="interaction">
    <interactant intactId="EBI-2838710">
        <id>Q8NFM4</id>
    </interactant>
    <interactant intactId="EBI-781384">
        <id>P37231</id>
        <label>PPARG</label>
    </interactant>
    <organismsDiffer>false</organismsDiffer>
    <experiments>3</experiments>
</comment>
<comment type="interaction">
    <interactant intactId="EBI-2838710">
        <id>Q8NFM4</id>
    </interactant>
    <interactant intactId="EBI-2130429">
        <id>Q9BYV2</id>
        <label>TRIM54</label>
    </interactant>
    <organismsDiffer>false</organismsDiffer>
    <experiments>3</experiments>
</comment>
<comment type="interaction">
    <interactant intactId="EBI-2838710">
        <id>Q8NFM4</id>
    </interactant>
    <interactant intactId="EBI-9090990">
        <id>Q5W5X9-3</id>
        <label>TTC23</label>
    </interactant>
    <organismsDiffer>false</organismsDiffer>
    <experiments>3</experiments>
</comment>
<comment type="subcellular location">
    <subcellularLocation>
        <location evidence="7">Cell membrane</location>
        <topology evidence="9">Multi-pass membrane protein</topology>
    </subcellularLocation>
    <subcellularLocation>
        <location evidence="6">Cytoplasm</location>
    </subcellularLocation>
</comment>
<comment type="alternative products">
    <event type="alternative splicing"/>
    <isoform>
        <id>Q8NFM4-1</id>
        <name>1</name>
        <sequence type="displayed"/>
    </isoform>
    <isoform>
        <id>Q8NFM4-2</id>
        <name>2</name>
        <sequence type="described" ref="VSP_055816 VSP_055817 VSP_055818 VSP_055819"/>
    </isoform>
</comment>
<comment type="tissue specificity">
    <text evidence="6">Detected in the zona glomerulosa and the zona fasciculata in the adrenal gland (at protein level).</text>
</comment>
<comment type="domain">
    <text evidence="3">The protein contains two modules with six transmembrane helices each; both are required for catalytic activity. Isolated N-terminal or C-terminal modules have no catalytic activity, but when they are brought together, enzyme activity is restored. The active site is at the interface of the two modules.</text>
</comment>
<comment type="similarity">
    <text evidence="5">Belongs to the adenylyl cyclase class-4/guanylyl cyclase family.</text>
</comment>
<comment type="sequence caution" evidence="9">
    <conflict type="erroneous initiation">
        <sequence resource="EMBL-CDS" id="BAB71270"/>
    </conflict>
</comment>
<dbReference type="EC" id="4.6.1.1" evidence="2"/>
<dbReference type="EMBL" id="AF497516">
    <property type="protein sequence ID" value="AAM94373.1"/>
    <property type="molecule type" value="mRNA"/>
</dbReference>
<dbReference type="EMBL" id="AK056745">
    <property type="protein sequence ID" value="BAB71270.1"/>
    <property type="status" value="ALT_INIT"/>
    <property type="molecule type" value="mRNA"/>
</dbReference>
<dbReference type="EMBL" id="AK122714">
    <property type="protein sequence ID" value="BAG53686.1"/>
    <property type="molecule type" value="mRNA"/>
</dbReference>
<dbReference type="EMBL" id="AK126468">
    <property type="protein sequence ID" value="BAC86560.1"/>
    <property type="molecule type" value="mRNA"/>
</dbReference>
<dbReference type="EMBL" id="AL096870">
    <property type="status" value="NOT_ANNOTATED_CDS"/>
    <property type="molecule type" value="Genomic_DNA"/>
</dbReference>
<dbReference type="EMBL" id="CH471078">
    <property type="protein sequence ID" value="EAW66023.1"/>
    <property type="molecule type" value="Genomic_DNA"/>
</dbReference>
<dbReference type="EMBL" id="CH471078">
    <property type="protein sequence ID" value="EAW66026.1"/>
    <property type="molecule type" value="Genomic_DNA"/>
</dbReference>
<dbReference type="EMBL" id="CH471078">
    <property type="protein sequence ID" value="EAW66027.1"/>
    <property type="molecule type" value="Genomic_DNA"/>
</dbReference>
<dbReference type="EMBL" id="CH471078">
    <property type="protein sequence ID" value="EAW66028.1"/>
    <property type="molecule type" value="Genomic_DNA"/>
</dbReference>
<dbReference type="EMBL" id="BC117473">
    <property type="protein sequence ID" value="AAI17474.1"/>
    <property type="molecule type" value="mRNA"/>
</dbReference>
<dbReference type="EMBL" id="BC117475">
    <property type="protein sequence ID" value="AAI17476.1"/>
    <property type="molecule type" value="mRNA"/>
</dbReference>
<dbReference type="CCDS" id="CCDS9627.1">
    <molecule id="Q8NFM4-1"/>
</dbReference>
<dbReference type="RefSeq" id="NP_001185497.1">
    <molecule id="Q8NFM4-1"/>
    <property type="nucleotide sequence ID" value="NM_001198568.2"/>
</dbReference>
<dbReference type="RefSeq" id="NP_001185521.1">
    <molecule id="Q8NFM4-1"/>
    <property type="nucleotide sequence ID" value="NM_001198592.2"/>
</dbReference>
<dbReference type="RefSeq" id="NP_640340.2">
    <molecule id="Q8NFM4-1"/>
    <property type="nucleotide sequence ID" value="NM_139247.3"/>
</dbReference>
<dbReference type="SMR" id="Q8NFM4"/>
<dbReference type="BioGRID" id="128229">
    <property type="interactions" value="7"/>
</dbReference>
<dbReference type="FunCoup" id="Q8NFM4">
    <property type="interactions" value="1605"/>
</dbReference>
<dbReference type="IntAct" id="Q8NFM4">
    <property type="interactions" value="9"/>
</dbReference>
<dbReference type="STRING" id="9606.ENSP00000312126"/>
<dbReference type="BindingDB" id="Q8NFM4"/>
<dbReference type="ChEMBL" id="CHEMBL2097167"/>
<dbReference type="DrugBank" id="DB02587">
    <property type="generic name" value="Colforsin"/>
</dbReference>
<dbReference type="GlyCosmos" id="Q8NFM4">
    <property type="glycosylation" value="2 sites, No reported glycans"/>
</dbReference>
<dbReference type="GlyGen" id="Q8NFM4">
    <property type="glycosylation" value="2 sites"/>
</dbReference>
<dbReference type="iPTMnet" id="Q8NFM4"/>
<dbReference type="PhosphoSitePlus" id="Q8NFM4"/>
<dbReference type="BioMuta" id="ADCY4"/>
<dbReference type="DMDM" id="25008336"/>
<dbReference type="jPOST" id="Q8NFM4"/>
<dbReference type="MassIVE" id="Q8NFM4"/>
<dbReference type="PaxDb" id="9606-ENSP00000312126"/>
<dbReference type="PeptideAtlas" id="Q8NFM4"/>
<dbReference type="ProteomicsDB" id="73323">
    <molecule id="Q8NFM4-1"/>
</dbReference>
<dbReference type="Antibodypedia" id="3908">
    <property type="antibodies" value="234 antibodies from 26 providers"/>
</dbReference>
<dbReference type="DNASU" id="196883"/>
<dbReference type="Ensembl" id="ENST00000310677.8">
    <molecule id="Q8NFM4-1"/>
    <property type="protein sequence ID" value="ENSP00000312126.4"/>
    <property type="gene ID" value="ENSG00000129467.14"/>
</dbReference>
<dbReference type="Ensembl" id="ENST00000418030.7">
    <molecule id="Q8NFM4-1"/>
    <property type="protein sequence ID" value="ENSP00000393177.2"/>
    <property type="gene ID" value="ENSG00000129467.14"/>
</dbReference>
<dbReference type="Ensembl" id="ENST00000554068.6">
    <molecule id="Q8NFM4-1"/>
    <property type="protein sequence ID" value="ENSP00000452250.2"/>
    <property type="gene ID" value="ENSG00000129467.14"/>
</dbReference>
<dbReference type="Ensembl" id="ENST00000642645.1">
    <molecule id="Q8NFM4-1"/>
    <property type="protein sequence ID" value="ENSP00000495316.1"/>
    <property type="gene ID" value="ENSG00000284814.1"/>
</dbReference>
<dbReference type="Ensembl" id="ENST00000644961.1">
    <molecule id="Q8NFM4-1"/>
    <property type="protein sequence ID" value="ENSP00000494454.1"/>
    <property type="gene ID" value="ENSG00000284814.1"/>
</dbReference>
<dbReference type="Ensembl" id="ENST00000646612.1">
    <molecule id="Q8NFM4-1"/>
    <property type="protein sequence ID" value="ENSP00000494977.1"/>
    <property type="gene ID" value="ENSG00000284814.1"/>
</dbReference>
<dbReference type="GeneID" id="196883"/>
<dbReference type="KEGG" id="hsa:196883"/>
<dbReference type="MANE-Select" id="ENST00000418030.7">
    <property type="protein sequence ID" value="ENSP00000393177.2"/>
    <property type="RefSeq nucleotide sequence ID" value="NM_001198568.2"/>
    <property type="RefSeq protein sequence ID" value="NP_001185497.1"/>
</dbReference>
<dbReference type="UCSC" id="uc001wow.4">
    <molecule id="Q8NFM4-1"/>
    <property type="organism name" value="human"/>
</dbReference>
<dbReference type="AGR" id="HGNC:235"/>
<dbReference type="CTD" id="196883"/>
<dbReference type="DisGeNET" id="196883"/>
<dbReference type="GeneCards" id="ADCY4"/>
<dbReference type="HGNC" id="HGNC:235">
    <property type="gene designation" value="ADCY4"/>
</dbReference>
<dbReference type="HPA" id="ENSG00000129467">
    <property type="expression patterns" value="Low tissue specificity"/>
</dbReference>
<dbReference type="MIM" id="600292">
    <property type="type" value="gene"/>
</dbReference>
<dbReference type="neXtProt" id="NX_Q8NFM4"/>
<dbReference type="OpenTargets" id="ENSG00000129467"/>
<dbReference type="PharmGKB" id="PA24562"/>
<dbReference type="VEuPathDB" id="HostDB:ENSG00000129467"/>
<dbReference type="eggNOG" id="KOG3619">
    <property type="taxonomic scope" value="Eukaryota"/>
</dbReference>
<dbReference type="GeneTree" id="ENSGT00940000159445"/>
<dbReference type="HOGENOM" id="CLU_001072_2_5_1"/>
<dbReference type="InParanoid" id="Q8NFM4"/>
<dbReference type="OMA" id="SKMVEFW"/>
<dbReference type="OrthoDB" id="10035433at2759"/>
<dbReference type="PAN-GO" id="Q8NFM4">
    <property type="GO annotations" value="3 GO annotations based on evolutionary models"/>
</dbReference>
<dbReference type="PhylomeDB" id="Q8NFM4"/>
<dbReference type="TreeFam" id="TF313845"/>
<dbReference type="PathwayCommons" id="Q8NFM4"/>
<dbReference type="Reactome" id="R-HSA-163359">
    <property type="pathway name" value="Glucagon signaling in metabolic regulation"/>
</dbReference>
<dbReference type="Reactome" id="R-HSA-163615">
    <property type="pathway name" value="PKA activation"/>
</dbReference>
<dbReference type="Reactome" id="R-HSA-164378">
    <property type="pathway name" value="PKA activation in glucagon signalling"/>
</dbReference>
<dbReference type="Reactome" id="R-HSA-170660">
    <property type="pathway name" value="Adenylate cyclase activating pathway"/>
</dbReference>
<dbReference type="Reactome" id="R-HSA-170670">
    <property type="pathway name" value="Adenylate cyclase inhibitory pathway"/>
</dbReference>
<dbReference type="Reactome" id="R-HSA-418555">
    <property type="pathway name" value="G alpha (s) signalling events"/>
</dbReference>
<dbReference type="Reactome" id="R-HSA-418594">
    <property type="pathway name" value="G alpha (i) signalling events"/>
</dbReference>
<dbReference type="Reactome" id="R-HSA-418597">
    <property type="pathway name" value="G alpha (z) signalling events"/>
</dbReference>
<dbReference type="Reactome" id="R-HSA-432040">
    <property type="pathway name" value="Vasopressin regulates renal water homeostasis via Aquaporins"/>
</dbReference>
<dbReference type="Reactome" id="R-HSA-5610787">
    <property type="pathway name" value="Hedgehog 'off' state"/>
</dbReference>
<dbReference type="Reactome" id="R-HSA-9634597">
    <property type="pathway name" value="GPER1 signaling"/>
</dbReference>
<dbReference type="Reactome" id="R-HSA-9660821">
    <property type="pathway name" value="ADORA2B mediated anti-inflammatory cytokines production"/>
</dbReference>
<dbReference type="Reactome" id="R-HSA-9664323">
    <property type="pathway name" value="FCGR3A-mediated IL10 synthesis"/>
</dbReference>
<dbReference type="Reactome" id="R-HSA-9856530">
    <property type="pathway name" value="High laminar flow shear stress activates signaling by PIEZO1 and PECAM1:CDH5:KDR in endothelial cells"/>
</dbReference>
<dbReference type="SignaLink" id="Q8NFM4"/>
<dbReference type="SIGNOR" id="Q8NFM4"/>
<dbReference type="BioGRID-ORCS" id="196883">
    <property type="hits" value="14 hits in 1141 CRISPR screens"/>
</dbReference>
<dbReference type="ChiTaRS" id="ADCY4">
    <property type="organism name" value="human"/>
</dbReference>
<dbReference type="GeneWiki" id="ADCY4"/>
<dbReference type="GenomeRNAi" id="196883"/>
<dbReference type="Pharos" id="Q8NFM4">
    <property type="development level" value="Tbio"/>
</dbReference>
<dbReference type="PRO" id="PR:Q8NFM4"/>
<dbReference type="Proteomes" id="UP000005640">
    <property type="component" value="Chromosome 14"/>
</dbReference>
<dbReference type="RNAct" id="Q8NFM4">
    <property type="molecule type" value="protein"/>
</dbReference>
<dbReference type="Bgee" id="ENSG00000129467">
    <property type="expression patterns" value="Expressed in apex of heart and 93 other cell types or tissues"/>
</dbReference>
<dbReference type="ExpressionAtlas" id="Q8NFM4">
    <property type="expression patterns" value="baseline and differential"/>
</dbReference>
<dbReference type="GO" id="GO:0005737">
    <property type="term" value="C:cytoplasm"/>
    <property type="evidence" value="ECO:0000314"/>
    <property type="project" value="UniProtKB"/>
</dbReference>
<dbReference type="GO" id="GO:0030425">
    <property type="term" value="C:dendrite"/>
    <property type="evidence" value="ECO:0007669"/>
    <property type="project" value="Ensembl"/>
</dbReference>
<dbReference type="GO" id="GO:0016020">
    <property type="term" value="C:membrane"/>
    <property type="evidence" value="ECO:0000250"/>
    <property type="project" value="BHF-UCL"/>
</dbReference>
<dbReference type="GO" id="GO:0005886">
    <property type="term" value="C:plasma membrane"/>
    <property type="evidence" value="ECO:0000318"/>
    <property type="project" value="GO_Central"/>
</dbReference>
<dbReference type="GO" id="GO:0004016">
    <property type="term" value="F:adenylate cyclase activity"/>
    <property type="evidence" value="ECO:0000250"/>
    <property type="project" value="BHF-UCL"/>
</dbReference>
<dbReference type="GO" id="GO:0005524">
    <property type="term" value="F:ATP binding"/>
    <property type="evidence" value="ECO:0007669"/>
    <property type="project" value="UniProtKB-KW"/>
</dbReference>
<dbReference type="GO" id="GO:0046872">
    <property type="term" value="F:metal ion binding"/>
    <property type="evidence" value="ECO:0007669"/>
    <property type="project" value="UniProtKB-KW"/>
</dbReference>
<dbReference type="GO" id="GO:0005080">
    <property type="term" value="F:protein kinase C binding"/>
    <property type="evidence" value="ECO:0000314"/>
    <property type="project" value="UniProtKB"/>
</dbReference>
<dbReference type="GO" id="GO:0007189">
    <property type="term" value="P:adenylate cyclase-activating G protein-coupled receptor signaling pathway"/>
    <property type="evidence" value="ECO:0000318"/>
    <property type="project" value="GO_Central"/>
</dbReference>
<dbReference type="GO" id="GO:0007188">
    <property type="term" value="P:adenylate cyclase-modulating G protein-coupled receptor signaling pathway"/>
    <property type="evidence" value="ECO:0000250"/>
    <property type="project" value="UniProtKB"/>
</dbReference>
<dbReference type="GO" id="GO:0006171">
    <property type="term" value="P:cAMP biosynthetic process"/>
    <property type="evidence" value="ECO:0000250"/>
    <property type="project" value="BHF-UCL"/>
</dbReference>
<dbReference type="GO" id="GO:0035556">
    <property type="term" value="P:intracellular signal transduction"/>
    <property type="evidence" value="ECO:0007669"/>
    <property type="project" value="InterPro"/>
</dbReference>
<dbReference type="CDD" id="cd07302">
    <property type="entry name" value="CHD"/>
    <property type="match status" value="2"/>
</dbReference>
<dbReference type="FunFam" id="3.30.70.1230:FF:000003">
    <property type="entry name" value="Adenylate cyclase"/>
    <property type="match status" value="1"/>
</dbReference>
<dbReference type="FunFam" id="3.30.70.1230:FF:000020">
    <property type="entry name" value="Adenylate cyclase"/>
    <property type="match status" value="1"/>
</dbReference>
<dbReference type="Gene3D" id="3.30.70.1230">
    <property type="entry name" value="Nucleotide cyclase"/>
    <property type="match status" value="2"/>
</dbReference>
<dbReference type="InterPro" id="IPR001054">
    <property type="entry name" value="A/G_cyclase"/>
</dbReference>
<dbReference type="InterPro" id="IPR018297">
    <property type="entry name" value="A/G_cyclase_CS"/>
</dbReference>
<dbReference type="InterPro" id="IPR032628">
    <property type="entry name" value="AC_N"/>
</dbReference>
<dbReference type="InterPro" id="IPR030672">
    <property type="entry name" value="Adcy"/>
</dbReference>
<dbReference type="InterPro" id="IPR009398">
    <property type="entry name" value="Adcy_conserved_dom"/>
</dbReference>
<dbReference type="InterPro" id="IPR029787">
    <property type="entry name" value="Nucleotide_cyclase"/>
</dbReference>
<dbReference type="PANTHER" id="PTHR45627">
    <property type="entry name" value="ADENYLATE CYCLASE TYPE 1"/>
    <property type="match status" value="1"/>
</dbReference>
<dbReference type="PANTHER" id="PTHR45627:SF10">
    <property type="entry name" value="ADENYLATE CYCLASE TYPE 4"/>
    <property type="match status" value="1"/>
</dbReference>
<dbReference type="Pfam" id="PF16214">
    <property type="entry name" value="AC_N"/>
    <property type="match status" value="1"/>
</dbReference>
<dbReference type="Pfam" id="PF06327">
    <property type="entry name" value="Adcy_cons_dom"/>
    <property type="match status" value="1"/>
</dbReference>
<dbReference type="Pfam" id="PF00211">
    <property type="entry name" value="Guanylate_cyc"/>
    <property type="match status" value="2"/>
</dbReference>
<dbReference type="PIRSF" id="PIRSF039050">
    <property type="entry name" value="Ade_cyc"/>
    <property type="match status" value="1"/>
</dbReference>
<dbReference type="SMART" id="SM00044">
    <property type="entry name" value="CYCc"/>
    <property type="match status" value="2"/>
</dbReference>
<dbReference type="SUPFAM" id="SSF55073">
    <property type="entry name" value="Nucleotide cyclase"/>
    <property type="match status" value="2"/>
</dbReference>
<dbReference type="PROSITE" id="PS00452">
    <property type="entry name" value="GUANYLATE_CYCLASE_1"/>
    <property type="match status" value="2"/>
</dbReference>
<dbReference type="PROSITE" id="PS50125">
    <property type="entry name" value="GUANYLATE_CYCLASE_2"/>
    <property type="match status" value="2"/>
</dbReference>
<keyword id="KW-0025">Alternative splicing</keyword>
<keyword id="KW-0067">ATP-binding</keyword>
<keyword id="KW-0115">cAMP biosynthesis</keyword>
<keyword id="KW-1003">Cell membrane</keyword>
<keyword id="KW-0963">Cytoplasm</keyword>
<keyword id="KW-0325">Glycoprotein</keyword>
<keyword id="KW-0456">Lyase</keyword>
<keyword id="KW-0460">Magnesium</keyword>
<keyword id="KW-0472">Membrane</keyword>
<keyword id="KW-0479">Metal-binding</keyword>
<keyword id="KW-0547">Nucleotide-binding</keyword>
<keyword id="KW-0597">Phosphoprotein</keyword>
<keyword id="KW-1267">Proteomics identification</keyword>
<keyword id="KW-1185">Reference proteome</keyword>
<keyword id="KW-0677">Repeat</keyword>
<keyword id="KW-0812">Transmembrane</keyword>
<keyword id="KW-1133">Transmembrane helix</keyword>
<evidence type="ECO:0000250" key="1">
    <source>
        <dbReference type="UniProtKB" id="P26769"/>
    </source>
</evidence>
<evidence type="ECO:0000250" key="2">
    <source>
        <dbReference type="UniProtKB" id="P26770"/>
    </source>
</evidence>
<evidence type="ECO:0000250" key="3">
    <source>
        <dbReference type="UniProtKB" id="P30803"/>
    </source>
</evidence>
<evidence type="ECO:0000255" key="4"/>
<evidence type="ECO:0000255" key="5">
    <source>
        <dbReference type="PROSITE-ProRule" id="PRU00099"/>
    </source>
</evidence>
<evidence type="ECO:0000269" key="6">
    <source>
    </source>
</evidence>
<evidence type="ECO:0000269" key="7">
    <source>
    </source>
</evidence>
<evidence type="ECO:0000303" key="8">
    <source>
    </source>
</evidence>
<evidence type="ECO:0000305" key="9"/>
<sequence length="1077" mass="119794">MARLFSPRPPPSEDLFYETYYSLSQQYPLLLLLLGIVLCALAALLAVAWASGRELTSDPSFLTTVLCALGGFSLLLGLASREQRLQRWTRPLSGLVWVALLALGHAFLFTGGVVSAWDQVSYFLFVIFTAYAMLPLGMRDAAVAGLASSLSHLLVLGLYLGPQPDSRPALLPQLAANAVLFLCGNVAGVYHKALMERALRATFREALSSLHSRRRLDTEKKHQEHLLLSILPAYLAREMKAEIMARLQAGQGSRPESTNNFHSLYVKRHQGVSVLYADIVGFTRLASECSPKELVLMLNELFGKFDQIAKEHECMRIKILGDCYYCVSGLPLSLPDHAINCVRMGLDMCRAIRKLRAATGVDINMRVGVHSGSVLCGVIGLQKWQYDVWSHDVTLANHMEAGGVPGRVHITGATLALLAGAYAVEDAGMEHRDPYLRELGEPTYLVIDPRAEEEDEKGTAGGLLSSLEGLKMRPSLLMTRYLESWGAAKPFAHLSHGDSPVSTSTPLPEKTLASFSTQWSLDRSRTPRGLDDELDTGDAKFFQVIEQLNSQKQWKQSKDFNPLTLYFREKEMEKEYRLSAIPAFKYYEACTFLVFLSNFIIQMLVTNRPPALAITYSITFLLFLLILFVCFSEDLMRCVLKGPKMLHWLPALSGLVATRPGLRIALGTATILLVFAMAITSLFFFPTSSDCPFQAPNVSSMISNLSWELPGSLPLISVPYSMHCCTLGFLSCSLFLHMSFELKLLLLLLWLAASCSLFLHSHAWLSECLIVRLYLGPLDSRPGVLKEPKLMGAISFFIFFFTLLVLARQNEYYCRLDFLWKKKLRQEREETETMENLTRLLLENVLPAHVAPQFIGQNRRNEDLYHQSYECVCVLFASVPDFKEFYSESNINHEGLECLRLLNEIIADFDELLSKPKFSGVEKIKTIGSTYMAATGLNATSGQDAQQDAERSCSHLGTMVEFAVALGSKLDVINKHSFNNFRLRVGLNHGPVVAGVIGAQKPQYDIWGNTVNVASRMESTGVLGKIQVTEETAWALQSLGYTCYSRGVIKVKGKGQLCTYFLNTDLTRTGPPSATLG</sequence>
<name>ADCY4_HUMAN</name>